<comment type="function">
    <text evidence="1">May act as a component of the cytoskeleton or as a chaperone for the reorganization of intermediate filament proteins during terminal differentiation in the lens. Does not seem to have enzymatic activity (By similarity).</text>
</comment>
<comment type="subunit">
    <text evidence="1">Dodecamer. Interacts with BFSP2 and VIM.</text>
</comment>
<comment type="tissue specificity">
    <text>Expressed in lens.</text>
</comment>
<comment type="similarity">
    <text evidence="5">Belongs to the glutamine synthetase family.</text>
</comment>
<evidence type="ECO:0000250" key="1"/>
<evidence type="ECO:0000255" key="2">
    <source>
        <dbReference type="PROSITE-ProRule" id="PRU01330"/>
    </source>
</evidence>
<evidence type="ECO:0000255" key="3">
    <source>
        <dbReference type="PROSITE-ProRule" id="PRU01331"/>
    </source>
</evidence>
<evidence type="ECO:0000256" key="4">
    <source>
        <dbReference type="SAM" id="MobiDB-lite"/>
    </source>
</evidence>
<evidence type="ECO:0000305" key="5"/>
<protein>
    <recommendedName>
        <fullName>Lengsin</fullName>
    </recommendedName>
    <alternativeName>
        <fullName>Glutamate-ammonia ligase domain-containing protein 1</fullName>
    </alternativeName>
    <alternativeName>
        <fullName>Lens glutamine synthase-like</fullName>
    </alternativeName>
</protein>
<organism>
    <name type="scientific">Rattus norvegicus</name>
    <name type="common">Rat</name>
    <dbReference type="NCBI Taxonomy" id="10116"/>
    <lineage>
        <taxon>Eukaryota</taxon>
        <taxon>Metazoa</taxon>
        <taxon>Chordata</taxon>
        <taxon>Craniata</taxon>
        <taxon>Vertebrata</taxon>
        <taxon>Euteleostomi</taxon>
        <taxon>Mammalia</taxon>
        <taxon>Eutheria</taxon>
        <taxon>Euarchontoglires</taxon>
        <taxon>Glires</taxon>
        <taxon>Rodentia</taxon>
        <taxon>Myomorpha</taxon>
        <taxon>Muroidea</taxon>
        <taxon>Muridae</taxon>
        <taxon>Murinae</taxon>
        <taxon>Rattus</taxon>
    </lineage>
</organism>
<proteinExistence type="evidence at transcript level"/>
<gene>
    <name type="primary">Lgsn</name>
    <name type="synonym">Gluld1</name>
    <name type="synonym">Lgs</name>
</gene>
<feature type="chain" id="PRO_0000153284" description="Lengsin">
    <location>
        <begin position="1"/>
        <end position="561"/>
    </location>
</feature>
<feature type="domain" description="GS beta-grasp" evidence="2">
    <location>
        <begin position="135"/>
        <end position="229"/>
    </location>
</feature>
<feature type="domain" description="GS catalytic" evidence="3">
    <location>
        <begin position="236"/>
        <end position="561"/>
    </location>
</feature>
<feature type="region of interest" description="Disordered" evidence="4">
    <location>
        <begin position="1"/>
        <end position="78"/>
    </location>
</feature>
<feature type="region of interest" description="Disordered" evidence="4">
    <location>
        <begin position="91"/>
        <end position="112"/>
    </location>
</feature>
<feature type="compositionally biased region" description="Basic residues" evidence="4">
    <location>
        <begin position="26"/>
        <end position="37"/>
    </location>
</feature>
<feature type="compositionally biased region" description="Polar residues" evidence="4">
    <location>
        <begin position="50"/>
        <end position="63"/>
    </location>
</feature>
<name>LGSN_RAT</name>
<dbReference type="EMBL" id="AY280501">
    <property type="protein sequence ID" value="AAP34385.1"/>
    <property type="molecule type" value="mRNA"/>
</dbReference>
<dbReference type="RefSeq" id="NP_852048.1">
    <property type="nucleotide sequence ID" value="NM_181383.2"/>
</dbReference>
<dbReference type="RefSeq" id="XP_017451926.1">
    <property type="nucleotide sequence ID" value="XM_017596437.2"/>
</dbReference>
<dbReference type="SMR" id="Q7TT51"/>
<dbReference type="FunCoup" id="Q7TT51">
    <property type="interactions" value="26"/>
</dbReference>
<dbReference type="STRING" id="10116.ENSRNOP00000016316"/>
<dbReference type="PhosphoSitePlus" id="Q7TT51"/>
<dbReference type="PaxDb" id="10116-ENSRNOP00000016316"/>
<dbReference type="Ensembl" id="ENSRNOT00000016316.5">
    <property type="protein sequence ID" value="ENSRNOP00000016316.3"/>
    <property type="gene ID" value="ENSRNOG00000012205.5"/>
</dbReference>
<dbReference type="GeneID" id="316304"/>
<dbReference type="KEGG" id="rno:316304"/>
<dbReference type="UCSC" id="RGD:727925">
    <property type="organism name" value="rat"/>
</dbReference>
<dbReference type="AGR" id="RGD:727925"/>
<dbReference type="CTD" id="51557"/>
<dbReference type="RGD" id="727925">
    <property type="gene designation" value="Lgsn"/>
</dbReference>
<dbReference type="eggNOG" id="KOG0683">
    <property type="taxonomic scope" value="Eukaryota"/>
</dbReference>
<dbReference type="GeneTree" id="ENSGT00390000013639"/>
<dbReference type="HOGENOM" id="CLU_017290_0_2_1"/>
<dbReference type="InParanoid" id="Q7TT51"/>
<dbReference type="OMA" id="NIMTFRL"/>
<dbReference type="OrthoDB" id="77835at2759"/>
<dbReference type="PhylomeDB" id="Q7TT51"/>
<dbReference type="TreeFam" id="TF331605"/>
<dbReference type="PRO" id="PR:Q7TT51"/>
<dbReference type="Proteomes" id="UP000002494">
    <property type="component" value="Chromosome 9"/>
</dbReference>
<dbReference type="Bgee" id="ENSRNOG00000012205">
    <property type="expression patterns" value="Expressed in liver and 1 other cell type or tissue"/>
</dbReference>
<dbReference type="GO" id="GO:0005737">
    <property type="term" value="C:cytoplasm"/>
    <property type="evidence" value="ECO:0000318"/>
    <property type="project" value="GO_Central"/>
</dbReference>
<dbReference type="GO" id="GO:0016020">
    <property type="term" value="C:membrane"/>
    <property type="evidence" value="ECO:0000318"/>
    <property type="project" value="GO_Central"/>
</dbReference>
<dbReference type="GO" id="GO:0005886">
    <property type="term" value="C:plasma membrane"/>
    <property type="evidence" value="ECO:0000266"/>
    <property type="project" value="RGD"/>
</dbReference>
<dbReference type="GO" id="GO:0003824">
    <property type="term" value="F:catalytic activity"/>
    <property type="evidence" value="ECO:0007669"/>
    <property type="project" value="InterPro"/>
</dbReference>
<dbReference type="FunFam" id="3.30.590.10:FF:000009">
    <property type="entry name" value="Lengsin, lens protein with glutamine synthetase domain"/>
    <property type="match status" value="1"/>
</dbReference>
<dbReference type="FunFam" id="3.10.20.70:FF:000007">
    <property type="entry name" value="LOW QUALITY PROTEIN: lengsin"/>
    <property type="match status" value="1"/>
</dbReference>
<dbReference type="Gene3D" id="3.10.20.70">
    <property type="entry name" value="Glutamine synthetase, N-terminal domain"/>
    <property type="match status" value="1"/>
</dbReference>
<dbReference type="Gene3D" id="3.30.590.10">
    <property type="entry name" value="Glutamine synthetase/guanido kinase, catalytic domain"/>
    <property type="match status" value="1"/>
</dbReference>
<dbReference type="InterPro" id="IPR008147">
    <property type="entry name" value="Gln_synt_N"/>
</dbReference>
<dbReference type="InterPro" id="IPR036651">
    <property type="entry name" value="Gln_synt_N_sf"/>
</dbReference>
<dbReference type="InterPro" id="IPR014746">
    <property type="entry name" value="Gln_synth/guanido_kin_cat_dom"/>
</dbReference>
<dbReference type="InterPro" id="IPR008146">
    <property type="entry name" value="Gln_synth_cat_dom"/>
</dbReference>
<dbReference type="PANTHER" id="PTHR43407">
    <property type="entry name" value="GLUTAMINE SYNTHETASE"/>
    <property type="match status" value="1"/>
</dbReference>
<dbReference type="PANTHER" id="PTHR43407:SF1">
    <property type="entry name" value="LENGSIN"/>
    <property type="match status" value="1"/>
</dbReference>
<dbReference type="Pfam" id="PF00120">
    <property type="entry name" value="Gln-synt_C"/>
    <property type="match status" value="1"/>
</dbReference>
<dbReference type="SMART" id="SM01230">
    <property type="entry name" value="Gln-synt_C"/>
    <property type="match status" value="1"/>
</dbReference>
<dbReference type="SUPFAM" id="SSF54368">
    <property type="entry name" value="Glutamine synthetase, N-terminal domain"/>
    <property type="match status" value="1"/>
</dbReference>
<dbReference type="SUPFAM" id="SSF55931">
    <property type="entry name" value="Glutamine synthetase/guanido kinase"/>
    <property type="match status" value="1"/>
</dbReference>
<dbReference type="PROSITE" id="PS51986">
    <property type="entry name" value="GS_BETA_GRASP"/>
    <property type="match status" value="1"/>
</dbReference>
<dbReference type="PROSITE" id="PS51987">
    <property type="entry name" value="GS_CATALYTIC"/>
    <property type="match status" value="1"/>
</dbReference>
<reference key="1">
    <citation type="submission" date="2003-04" db="EMBL/GenBank/DDBJ databases">
        <authorList>
            <person name="Wistow G."/>
        </authorList>
    </citation>
    <scope>NUCLEOTIDE SEQUENCE [MRNA]</scope>
    <source>
        <strain>Sprague-Dawley</strain>
        <tissue>Eye</tissue>
    </source>
</reference>
<accession>Q7TT51</accession>
<keyword id="KW-1185">Reference proteome</keyword>
<sequence length="561" mass="62269">MNDEGDLAQEDTTKDEANSTEGSRVNKLKRTRRKVTKPHLCSADGDEITMANSREMSRNQTADLSKPGSAESWSWHNAKDAQDQIPVVKSSLPSAGAPDAEFNPNTDHTRDNAQSLILPQLSSRMKHIKQEMAKNHLQFVRFEATDLHGVSRSKSIPAQFFQEKVIHGVFMPRGYLELMPNPKDNEVNHIRATCFNSDIVLMPELSTFRVLPWAERTARVICDTFTVTGEPLLTSPRYIAKRQLRQLQDAGFSLLSAFIYDFCIFGVPEVINSKTISFPASTLLSNHDQPFMQELVDGLYHTGANVESFSSSTRPGQMEICFLPEFGISSADNAFTLRTGVQEVARRYNYIASLVIETGFCNSGILSHSIWDVSGKTNMFYSGSGVERLTLTGKKWLAGLLKHSAALSCLMAPAVNCRKRYCKDSRDLKDSVPTTWGYNDNSCALNVKCHGEKGTQIENKLGSATANPYLVLAATVAAGLDGLQSSDGAAAESDESQDLYQPEPSEIPLKMEDALAALEQDECLKQALGETFIRYFVAMKKYELENEETDAEGNKFLEYFI</sequence>